<reference key="1">
    <citation type="journal article" date="2005" name="J. Bacteriol.">
        <title>Insights on evolution of virulence and resistance from the complete genome analysis of an early methicillin-resistant Staphylococcus aureus strain and a biofilm-producing methicillin-resistant Staphylococcus epidermidis strain.</title>
        <authorList>
            <person name="Gill S.R."/>
            <person name="Fouts D.E."/>
            <person name="Archer G.L."/>
            <person name="Mongodin E.F."/>
            <person name="DeBoy R.T."/>
            <person name="Ravel J."/>
            <person name="Paulsen I.T."/>
            <person name="Kolonay J.F."/>
            <person name="Brinkac L.M."/>
            <person name="Beanan M.J."/>
            <person name="Dodson R.J."/>
            <person name="Daugherty S.C."/>
            <person name="Madupu R."/>
            <person name="Angiuoli S.V."/>
            <person name="Durkin A.S."/>
            <person name="Haft D.H."/>
            <person name="Vamathevan J.J."/>
            <person name="Khouri H."/>
            <person name="Utterback T.R."/>
            <person name="Lee C."/>
            <person name="Dimitrov G."/>
            <person name="Jiang L."/>
            <person name="Qin H."/>
            <person name="Weidman J."/>
            <person name="Tran K."/>
            <person name="Kang K.H."/>
            <person name="Hance I.R."/>
            <person name="Nelson K.E."/>
            <person name="Fraser C.M."/>
        </authorList>
    </citation>
    <scope>NUCLEOTIDE SEQUENCE [LARGE SCALE GENOMIC DNA]</scope>
    <source>
        <strain>ATCC 35984 / DSM 28319 / BCRC 17069 / CCUG 31568 / BM 3577 / RP62A</strain>
    </source>
</reference>
<accession>Q5HKJ6</accession>
<gene>
    <name evidence="1" type="primary">fosB</name>
    <name type="ordered locus">SERP2349</name>
</gene>
<comment type="function">
    <text evidence="1">Metallothiol transferase which confers resistance to fosfomycin by catalyzing the addition of a thiol cofactor to fosfomycin. L-cysteine is probably the physiological thiol donor.</text>
</comment>
<comment type="cofactor">
    <cofactor evidence="1">
        <name>Mg(2+)</name>
        <dbReference type="ChEBI" id="CHEBI:18420"/>
    </cofactor>
</comment>
<comment type="subunit">
    <text evidence="1">Homodimer.</text>
</comment>
<comment type="subcellular location">
    <subcellularLocation>
        <location evidence="1">Cytoplasm</location>
    </subcellularLocation>
</comment>
<comment type="similarity">
    <text evidence="1">Belongs to the fosfomycin resistance protein family. FosB subfamily.</text>
</comment>
<sequence>MEITNVNHICFSVSDLNTSIQFYKDILHGDLLVSGRTTAYLTIGHTWIALNQEKNIPRNEISHSYTHVAFSIDEEDFQQWIQWLKENQVNILKGRPRDIKDKKSIYFTDLDGHKIELHTGTLKDRMEYYKCEKTHMQFYDEF</sequence>
<keyword id="KW-0046">Antibiotic resistance</keyword>
<keyword id="KW-0963">Cytoplasm</keyword>
<keyword id="KW-0460">Magnesium</keyword>
<keyword id="KW-0479">Metal-binding</keyword>
<keyword id="KW-1185">Reference proteome</keyword>
<keyword id="KW-0808">Transferase</keyword>
<protein>
    <recommendedName>
        <fullName evidence="1">Metallothiol transferase FosB</fullName>
        <ecNumber evidence="1">2.5.1.-</ecNumber>
    </recommendedName>
    <alternativeName>
        <fullName evidence="1">Fosfomycin resistance protein</fullName>
    </alternativeName>
</protein>
<name>FOSB_STAEQ</name>
<proteinExistence type="inferred from homology"/>
<evidence type="ECO:0000255" key="1">
    <source>
        <dbReference type="HAMAP-Rule" id="MF_01512"/>
    </source>
</evidence>
<evidence type="ECO:0000255" key="2">
    <source>
        <dbReference type="PROSITE-ProRule" id="PRU01163"/>
    </source>
</evidence>
<feature type="chain" id="PRO_0000164040" description="Metallothiol transferase FosB">
    <location>
        <begin position="1"/>
        <end position="142"/>
    </location>
</feature>
<feature type="domain" description="VOC" evidence="2">
    <location>
        <begin position="5"/>
        <end position="120"/>
    </location>
</feature>
<feature type="active site" description="Proton donor/acceptor" evidence="2">
    <location>
        <position position="116"/>
    </location>
</feature>
<feature type="binding site" evidence="1">
    <location>
        <position position="8"/>
    </location>
    <ligand>
        <name>Mg(2+)</name>
        <dbReference type="ChEBI" id="CHEBI:18420"/>
    </ligand>
</feature>
<feature type="binding site" evidence="1">
    <location>
        <position position="67"/>
    </location>
    <ligand>
        <name>Mg(2+)</name>
        <dbReference type="ChEBI" id="CHEBI:18420"/>
    </ligand>
</feature>
<feature type="binding site" evidence="1">
    <location>
        <position position="116"/>
    </location>
    <ligand>
        <name>Mg(2+)</name>
        <dbReference type="ChEBI" id="CHEBI:18420"/>
    </ligand>
</feature>
<organism>
    <name type="scientific">Staphylococcus epidermidis (strain ATCC 35984 / DSM 28319 / BCRC 17069 / CCUG 31568 / BM 3577 / RP62A)</name>
    <dbReference type="NCBI Taxonomy" id="176279"/>
    <lineage>
        <taxon>Bacteria</taxon>
        <taxon>Bacillati</taxon>
        <taxon>Bacillota</taxon>
        <taxon>Bacilli</taxon>
        <taxon>Bacillales</taxon>
        <taxon>Staphylococcaceae</taxon>
        <taxon>Staphylococcus</taxon>
    </lineage>
</organism>
<dbReference type="EC" id="2.5.1.-" evidence="1"/>
<dbReference type="EMBL" id="CP000029">
    <property type="protein sequence ID" value="AAW53146.1"/>
    <property type="molecule type" value="Genomic_DNA"/>
</dbReference>
<dbReference type="RefSeq" id="WP_002467687.1">
    <property type="nucleotide sequence ID" value="NG_047888.1"/>
</dbReference>
<dbReference type="SMR" id="Q5HKJ6"/>
<dbReference type="STRING" id="176279.SERP2349"/>
<dbReference type="KEGG" id="ser:SERP2349"/>
<dbReference type="eggNOG" id="COG0346">
    <property type="taxonomic scope" value="Bacteria"/>
</dbReference>
<dbReference type="HOGENOM" id="CLU_121356_0_0_9"/>
<dbReference type="Proteomes" id="UP000000531">
    <property type="component" value="Chromosome"/>
</dbReference>
<dbReference type="GO" id="GO:0005737">
    <property type="term" value="C:cytoplasm"/>
    <property type="evidence" value="ECO:0007669"/>
    <property type="project" value="UniProtKB-SubCell"/>
</dbReference>
<dbReference type="GO" id="GO:0000287">
    <property type="term" value="F:magnesium ion binding"/>
    <property type="evidence" value="ECO:0007669"/>
    <property type="project" value="UniProtKB-UniRule"/>
</dbReference>
<dbReference type="GO" id="GO:0016765">
    <property type="term" value="F:transferase activity, transferring alkyl or aryl (other than methyl) groups"/>
    <property type="evidence" value="ECO:0007669"/>
    <property type="project" value="UniProtKB-UniRule"/>
</dbReference>
<dbReference type="GO" id="GO:0046677">
    <property type="term" value="P:response to antibiotic"/>
    <property type="evidence" value="ECO:0007669"/>
    <property type="project" value="UniProtKB-UniRule"/>
</dbReference>
<dbReference type="CDD" id="cd08363">
    <property type="entry name" value="FosB"/>
    <property type="match status" value="1"/>
</dbReference>
<dbReference type="Gene3D" id="3.10.180.10">
    <property type="entry name" value="2,3-Dihydroxybiphenyl 1,2-Dioxygenase, domain 1"/>
    <property type="match status" value="1"/>
</dbReference>
<dbReference type="HAMAP" id="MF_01512">
    <property type="entry name" value="FosB"/>
    <property type="match status" value="1"/>
</dbReference>
<dbReference type="InterPro" id="IPR051332">
    <property type="entry name" value="Fosfomycin_Res_Enzymes"/>
</dbReference>
<dbReference type="InterPro" id="IPR029068">
    <property type="entry name" value="Glyas_Bleomycin-R_OHBP_Dase"/>
</dbReference>
<dbReference type="InterPro" id="IPR004360">
    <property type="entry name" value="Glyas_Fos-R_dOase_dom"/>
</dbReference>
<dbReference type="InterPro" id="IPR022858">
    <property type="entry name" value="Metallothiol_Trafse_FosB"/>
</dbReference>
<dbReference type="InterPro" id="IPR037523">
    <property type="entry name" value="VOC"/>
</dbReference>
<dbReference type="NCBIfam" id="NF000493">
    <property type="entry name" value="Fos_BSH"/>
    <property type="match status" value="1"/>
</dbReference>
<dbReference type="NCBIfam" id="NF000063">
    <property type="entry name" value="Fos_BSH_Sepi"/>
    <property type="match status" value="1"/>
</dbReference>
<dbReference type="NCBIfam" id="NF003152">
    <property type="entry name" value="PRK04101.1"/>
    <property type="match status" value="1"/>
</dbReference>
<dbReference type="PANTHER" id="PTHR36113:SF6">
    <property type="entry name" value="FOSFOMYCIN RESISTANCE PROTEIN FOSX"/>
    <property type="match status" value="1"/>
</dbReference>
<dbReference type="PANTHER" id="PTHR36113">
    <property type="entry name" value="LYASE, PUTATIVE-RELATED-RELATED"/>
    <property type="match status" value="1"/>
</dbReference>
<dbReference type="Pfam" id="PF00903">
    <property type="entry name" value="Glyoxalase"/>
    <property type="match status" value="1"/>
</dbReference>
<dbReference type="SUPFAM" id="SSF54593">
    <property type="entry name" value="Glyoxalase/Bleomycin resistance protein/Dihydroxybiphenyl dioxygenase"/>
    <property type="match status" value="1"/>
</dbReference>
<dbReference type="PROSITE" id="PS51819">
    <property type="entry name" value="VOC"/>
    <property type="match status" value="1"/>
</dbReference>